<evidence type="ECO:0000255" key="1">
    <source>
        <dbReference type="HAMAP-Rule" id="MF_01221"/>
    </source>
</evidence>
<feature type="chain" id="PRO_0000070552" description="UPF0210 protein CA_C0479">
    <location>
        <begin position="1"/>
        <end position="451"/>
    </location>
</feature>
<reference key="1">
    <citation type="journal article" date="2001" name="J. Bacteriol.">
        <title>Genome sequence and comparative analysis of the solvent-producing bacterium Clostridium acetobutylicum.</title>
        <authorList>
            <person name="Noelling J."/>
            <person name="Breton G."/>
            <person name="Omelchenko M.V."/>
            <person name="Makarova K.S."/>
            <person name="Zeng Q."/>
            <person name="Gibson R."/>
            <person name="Lee H.M."/>
            <person name="Dubois J."/>
            <person name="Qiu D."/>
            <person name="Hitti J."/>
            <person name="Wolf Y.I."/>
            <person name="Tatusov R.L."/>
            <person name="Sabathe F."/>
            <person name="Doucette-Stamm L.A."/>
            <person name="Soucaille P."/>
            <person name="Daly M.J."/>
            <person name="Bennett G.N."/>
            <person name="Koonin E.V."/>
            <person name="Smith D.R."/>
        </authorList>
    </citation>
    <scope>NUCLEOTIDE SEQUENCE [LARGE SCALE GENOMIC DNA]</scope>
    <source>
        <strain>ATCC 824 / DSM 792 / JCM 1419 / IAM 19013 / LMG 5710 / NBRC 13948 / NRRL B-527 / VKM B-1787 / 2291 / W</strain>
    </source>
</reference>
<comment type="subunit">
    <text evidence="1">Homodimer.</text>
</comment>
<comment type="similarity">
    <text evidence="1">Belongs to the UPF0210 family.</text>
</comment>
<sequence length="451" mass="47345">MNTNEIMSTIKMIEEQKLDIRTITMGISLRDCCSFNGEESRKRIYDKITRYAQDLVRVGEEIERDYGIPIINKRISVTPISMIAESSDDKDYVEYAKTLDRAAKAVGVNLIGGFSALVHKGCTKGDKILLQSIPEALHTTDIVCSSVNVGSSKTGINMNAVKQMGHIIKDVANLSASTNGMECMKLVVFANAIEDNPFMAGAFHGVGEAECVINVGISGPGVVKASLEKVKGEPFDVVAETIKKTAFRITRAGQLVAREASKKLDVPFGIIDLSLAPTPAVGDSVARIIEEIGVEACGAPGTTAALALLNDAVKKGGIMAASHVGGLSGAFIPVSEDEGMIAAVKSGALNLEKLEAMTCVCSVGLDMIAVPGDTPAETISGIIADEAAIGVINNKTTAVRIIPAIGMGVGDSVEFGGLFGTAPVMPVSKFSSADFINRGGRIPSPIHSFKN</sequence>
<organism>
    <name type="scientific">Clostridium acetobutylicum (strain ATCC 824 / DSM 792 / JCM 1419 / IAM 19013 / LMG 5710 / NBRC 13948 / NRRL B-527 / VKM B-1787 / 2291 / W)</name>
    <dbReference type="NCBI Taxonomy" id="272562"/>
    <lineage>
        <taxon>Bacteria</taxon>
        <taxon>Bacillati</taxon>
        <taxon>Bacillota</taxon>
        <taxon>Clostridia</taxon>
        <taxon>Eubacteriales</taxon>
        <taxon>Clostridiaceae</taxon>
        <taxon>Clostridium</taxon>
    </lineage>
</organism>
<gene>
    <name type="ordered locus">CA_C0479</name>
</gene>
<name>Y479_CLOAB</name>
<accession>Q97LS5</accession>
<keyword id="KW-1185">Reference proteome</keyword>
<protein>
    <recommendedName>
        <fullName evidence="1">UPF0210 protein CA_C0479</fullName>
    </recommendedName>
</protein>
<dbReference type="EMBL" id="AE001437">
    <property type="protein sequence ID" value="AAK78459.1"/>
    <property type="molecule type" value="Genomic_DNA"/>
</dbReference>
<dbReference type="PIR" id="H96958">
    <property type="entry name" value="H96958"/>
</dbReference>
<dbReference type="RefSeq" id="NP_347119.1">
    <property type="nucleotide sequence ID" value="NC_003030.1"/>
</dbReference>
<dbReference type="RefSeq" id="WP_010963801.1">
    <property type="nucleotide sequence ID" value="NC_003030.1"/>
</dbReference>
<dbReference type="SMR" id="Q97LS5"/>
<dbReference type="STRING" id="272562.CA_C0479"/>
<dbReference type="KEGG" id="cac:CA_C0479"/>
<dbReference type="PATRIC" id="fig|272562.8.peg.678"/>
<dbReference type="eggNOG" id="COG2848">
    <property type="taxonomic scope" value="Bacteria"/>
</dbReference>
<dbReference type="HOGENOM" id="CLU_048704_0_0_9"/>
<dbReference type="OrthoDB" id="9763001at2"/>
<dbReference type="Proteomes" id="UP000000814">
    <property type="component" value="Chromosome"/>
</dbReference>
<dbReference type="CDD" id="cd08025">
    <property type="entry name" value="RNR_PFL_like_DUF711"/>
    <property type="match status" value="1"/>
</dbReference>
<dbReference type="Gene3D" id="3.20.70.20">
    <property type="match status" value="1"/>
</dbReference>
<dbReference type="HAMAP" id="MF_01221">
    <property type="entry name" value="UPF0210"/>
    <property type="match status" value="1"/>
</dbReference>
<dbReference type="InterPro" id="IPR007841">
    <property type="entry name" value="UPF0210"/>
</dbReference>
<dbReference type="NCBIfam" id="NF003700">
    <property type="entry name" value="PRK05313.1"/>
    <property type="match status" value="1"/>
</dbReference>
<dbReference type="PANTHER" id="PTHR37560:SF1">
    <property type="entry name" value="UPF0210 PROTEIN MJ1665"/>
    <property type="match status" value="1"/>
</dbReference>
<dbReference type="PANTHER" id="PTHR37560">
    <property type="entry name" value="UPF0210 PROTEIN SPR0218"/>
    <property type="match status" value="1"/>
</dbReference>
<dbReference type="Pfam" id="PF05167">
    <property type="entry name" value="DUF711"/>
    <property type="match status" value="1"/>
</dbReference>
<dbReference type="SUPFAM" id="SSF51998">
    <property type="entry name" value="PFL-like glycyl radical enzymes"/>
    <property type="match status" value="1"/>
</dbReference>
<proteinExistence type="inferred from homology"/>